<gene>
    <name type="ordered locus">MT2410</name>
</gene>
<protein>
    <recommendedName>
        <fullName>UPF0603 protein MT2410</fullName>
    </recommendedName>
</protein>
<accession>P9WFJ4</accession>
<accession>L0TAY3</accession>
<accession>P95241</accession>
<accession>Q7D7A4</accession>
<proteinExistence type="inferred from homology"/>
<dbReference type="EMBL" id="AE000516">
    <property type="protein sequence ID" value="AAK46703.1"/>
    <property type="molecule type" value="Genomic_DNA"/>
</dbReference>
<dbReference type="PIR" id="B70662">
    <property type="entry name" value="B70662"/>
</dbReference>
<dbReference type="RefSeq" id="WP_003899282.1">
    <property type="nucleotide sequence ID" value="NZ_KK341227.1"/>
</dbReference>
<dbReference type="SMR" id="P9WFJ4"/>
<dbReference type="KEGG" id="mtc:MT2410"/>
<dbReference type="PATRIC" id="fig|83331.31.peg.2598"/>
<dbReference type="HOGENOM" id="CLU_013689_1_0_11"/>
<dbReference type="Proteomes" id="UP000001020">
    <property type="component" value="Chromosome"/>
</dbReference>
<dbReference type="GO" id="GO:0005886">
    <property type="term" value="C:plasma membrane"/>
    <property type="evidence" value="ECO:0007669"/>
    <property type="project" value="UniProtKB-SubCell"/>
</dbReference>
<dbReference type="FunFam" id="3.10.310.50:FF:000004">
    <property type="entry name" value="POSSIBLE CONSERVED TRANSMEMBRANE PROTEIN"/>
    <property type="match status" value="1"/>
</dbReference>
<dbReference type="Gene3D" id="3.10.310.50">
    <property type="match status" value="1"/>
</dbReference>
<dbReference type="InterPro" id="IPR007621">
    <property type="entry name" value="TPM_dom"/>
</dbReference>
<dbReference type="Pfam" id="PF04536">
    <property type="entry name" value="TPM_phosphatase"/>
    <property type="match status" value="1"/>
</dbReference>
<name>Y2345_MYCTO</name>
<organism>
    <name type="scientific">Mycobacterium tuberculosis (strain CDC 1551 / Oshkosh)</name>
    <dbReference type="NCBI Taxonomy" id="83331"/>
    <lineage>
        <taxon>Bacteria</taxon>
        <taxon>Bacillati</taxon>
        <taxon>Actinomycetota</taxon>
        <taxon>Actinomycetes</taxon>
        <taxon>Mycobacteriales</taxon>
        <taxon>Mycobacteriaceae</taxon>
        <taxon>Mycobacterium</taxon>
        <taxon>Mycobacterium tuberculosis complex</taxon>
    </lineage>
</organism>
<evidence type="ECO:0000250" key="1"/>
<evidence type="ECO:0000255" key="2"/>
<evidence type="ECO:0000256" key="3">
    <source>
        <dbReference type="SAM" id="MobiDB-lite"/>
    </source>
</evidence>
<evidence type="ECO:0000269" key="4">
    <source>
    </source>
</evidence>
<evidence type="ECO:0000305" key="5"/>
<feature type="signal peptide" evidence="2">
    <location>
        <begin position="1"/>
        <end position="26"/>
    </location>
</feature>
<feature type="chain" id="PRO_0000428528" description="UPF0603 protein MT2410">
    <location>
        <begin position="27"/>
        <end position="660"/>
    </location>
</feature>
<feature type="transmembrane region" description="Helical" evidence="2">
    <location>
        <begin position="162"/>
        <end position="182"/>
    </location>
</feature>
<feature type="transmembrane region" description="Helical" evidence="2">
    <location>
        <begin position="605"/>
        <end position="625"/>
    </location>
</feature>
<feature type="region of interest" description="Disordered" evidence="3">
    <location>
        <begin position="638"/>
        <end position="660"/>
    </location>
</feature>
<feature type="coiled-coil region" evidence="2">
    <location>
        <begin position="488"/>
        <end position="567"/>
    </location>
</feature>
<comment type="function">
    <text evidence="1">May play a role in septum formation.</text>
</comment>
<comment type="subcellular location">
    <subcellularLocation>
        <location evidence="5">Cell membrane</location>
        <topology evidence="5">Multi-pass membrane protein</topology>
    </subcellularLocation>
</comment>
<comment type="disruption phenotype">
    <text evidence="4">Not essential for growth.</text>
</comment>
<comment type="similarity">
    <text evidence="5">Belongs to the UPF0603 family.</text>
</comment>
<sequence length="660" mass="70030">MRLVRLLGMVLTILAAGLLLGPPAGAQPPFRLSNYVTDNAGVLTSSGRTAVTAAVDRLYADRRIRLWVVYVENFSGQSALNWAQRTTRTSELGNYDALLAVATTGREYAFLVPSAMPGVSEGQVDNVRRYQIEPALHDGDYSGAAVAAANGLNRSPSSSSRVVLLVTVGIIVIVVAVLLVVMRHRNRRRRADELAAARRVDPTNVMALAAVPLQALDDLSRSMVVDVDNAVRTSTNELALAIEEFGERRTAPFTQAVNNAKAALSQAFTVRQQLDDNTPETPAQRRELLTRVIVSAAHADRELASQTEAFEKLRDLVINAPARLDLLTQQYVELTTRIGPTQQRLAELHTEFDAAAMTSIAGNVTTATERLAFADRNISAARDLADQAVSGRQAGLVDAVRAAESALGQARALLDAVDSAATDIRHAVASLPAVVADIQTGIKRANQHLQQAQQPQTGRTGDLIAARDAAARALDRARGAADPLTAFDQLTKVDADLDRLLATLAEEQATADRLNRSLEQALFTAESRVRAVSEYIDTRRGSIGPEARTRLAEAKRQLEAAHDRKSSNPTEAIAYANAASTLAAHAQSLANADVQSAQRAYTRRGGNNAGAILGGIIIGDLLSGGTRGGLGGWIPTSFGGSSNAPGSSPDGGFLGGGGRF</sequence>
<keyword id="KW-1003">Cell membrane</keyword>
<keyword id="KW-0175">Coiled coil</keyword>
<keyword id="KW-0472">Membrane</keyword>
<keyword id="KW-1185">Reference proteome</keyword>
<keyword id="KW-0732">Signal</keyword>
<keyword id="KW-0812">Transmembrane</keyword>
<keyword id="KW-1133">Transmembrane helix</keyword>
<reference key="1">
    <citation type="journal article" date="2002" name="J. Bacteriol.">
        <title>Whole-genome comparison of Mycobacterium tuberculosis clinical and laboratory strains.</title>
        <authorList>
            <person name="Fleischmann R.D."/>
            <person name="Alland D."/>
            <person name="Eisen J.A."/>
            <person name="Carpenter L."/>
            <person name="White O."/>
            <person name="Peterson J.D."/>
            <person name="DeBoy R.T."/>
            <person name="Dodson R.J."/>
            <person name="Gwinn M.L."/>
            <person name="Haft D.H."/>
            <person name="Hickey E.K."/>
            <person name="Kolonay J.F."/>
            <person name="Nelson W.C."/>
            <person name="Umayam L.A."/>
            <person name="Ermolaeva M.D."/>
            <person name="Salzberg S.L."/>
            <person name="Delcher A."/>
            <person name="Utterback T.R."/>
            <person name="Weidman J.F."/>
            <person name="Khouri H.M."/>
            <person name="Gill J."/>
            <person name="Mikula A."/>
            <person name="Bishai W."/>
            <person name="Jacobs W.R. Jr."/>
            <person name="Venter J.C."/>
            <person name="Fraser C.M."/>
        </authorList>
    </citation>
    <scope>NUCLEOTIDE SEQUENCE [LARGE SCALE GENOMIC DNA]</scope>
    <source>
        <strain>CDC 1551 / Oshkosh</strain>
    </source>
</reference>
<reference key="2">
    <citation type="journal article" date="2003" name="Proc. Natl. Acad. Sci. U.S.A.">
        <title>A postgenomic method for predicting essential genes at subsaturation levels of mutagenesis: application to Mycobacterium tuberculosis.</title>
        <authorList>
            <person name="Lamichhane G."/>
            <person name="Zignol M."/>
            <person name="Blades N.J."/>
            <person name="Geiman D.E."/>
            <person name="Dougherty A."/>
            <person name="Grosset J."/>
            <person name="Broman K.W."/>
            <person name="Bishai W.R."/>
        </authorList>
    </citation>
    <scope>DISRUPTION PHENOTYPE</scope>
    <source>
        <strain>CDC 1551 / Oshkosh</strain>
    </source>
</reference>